<sequence>MADGERSPLLLDGRDGMTGLSLGDEPYRPISKPQNFAVFPSAPPMLGEAPPPYSPLGSPESSSAPVISCRVCQSLISVEGKIHQHVVKCGVCNEATPIKNAPAGKKYVRCPCNCLLICKVTSQRIACPRPYCKRVINLGPVNPGAGSPNPQPTGARVSCGHCAKTFLWTEFTDRTLARCPHCRKVSSIGQRYPRKRSLICFLLCLIFVITTAGLIAGTWLKAQKYKGIYASWVFFIVLVLVTLVRALHWACMKISEPLHNYS</sequence>
<keyword id="KW-0967">Endosome</keyword>
<keyword id="KW-0378">Hydrolase</keyword>
<keyword id="KW-0458">Lysosome</keyword>
<keyword id="KW-0472">Membrane</keyword>
<keyword id="KW-1185">Reference proteome</keyword>
<keyword id="KW-0812">Transmembrane</keyword>
<keyword id="KW-1133">Transmembrane helix</keyword>
<proteinExistence type="evidence at transcript level"/>
<protein>
    <recommendedName>
        <fullName>Type I phosphatidylinositol 4,5-bisphosphate 4-phosphatase-B</fullName>
        <shortName>PtdIns-4,5-P2 4-Ptase I-B</shortName>
        <ecNumber>3.1.3.78</ecNumber>
    </recommendedName>
    <alternativeName>
        <fullName>Transmembrane protein 55B-B</fullName>
    </alternativeName>
</protein>
<name>T55BB_DANRE</name>
<accession>Q66I51</accession>
<organism>
    <name type="scientific">Danio rerio</name>
    <name type="common">Zebrafish</name>
    <name type="synonym">Brachydanio rerio</name>
    <dbReference type="NCBI Taxonomy" id="7955"/>
    <lineage>
        <taxon>Eukaryota</taxon>
        <taxon>Metazoa</taxon>
        <taxon>Chordata</taxon>
        <taxon>Craniata</taxon>
        <taxon>Vertebrata</taxon>
        <taxon>Euteleostomi</taxon>
        <taxon>Actinopterygii</taxon>
        <taxon>Neopterygii</taxon>
        <taxon>Teleostei</taxon>
        <taxon>Ostariophysi</taxon>
        <taxon>Cypriniformes</taxon>
        <taxon>Danionidae</taxon>
        <taxon>Danioninae</taxon>
        <taxon>Danio</taxon>
    </lineage>
</organism>
<gene>
    <name type="primary">tmem55bb</name>
</gene>
<reference key="1">
    <citation type="submission" date="2004-09" db="EMBL/GenBank/DDBJ databases">
        <authorList>
            <consortium name="NIH - Zebrafish Gene Collection (ZGC) project"/>
        </authorList>
    </citation>
    <scope>NUCLEOTIDE SEQUENCE [LARGE SCALE MRNA]</scope>
    <source>
        <tissue>Brain</tissue>
    </source>
</reference>
<dbReference type="EC" id="3.1.3.78"/>
<dbReference type="EMBL" id="BC081529">
    <property type="protein sequence ID" value="AAH81529.1"/>
    <property type="status" value="ALT_INIT"/>
    <property type="molecule type" value="mRNA"/>
</dbReference>
<dbReference type="RefSeq" id="NP_001153393.1">
    <property type="nucleotide sequence ID" value="NM_001159921.1"/>
</dbReference>
<dbReference type="SMR" id="Q66I51"/>
<dbReference type="FunCoup" id="Q66I51">
    <property type="interactions" value="628"/>
</dbReference>
<dbReference type="STRING" id="7955.ENSDARP00000029568"/>
<dbReference type="PaxDb" id="7955-ENSDARP00000029568"/>
<dbReference type="Ensembl" id="ENSDART00000029774">
    <property type="protein sequence ID" value="ENSDARP00000029568"/>
    <property type="gene ID" value="ENSDARG00000026387"/>
</dbReference>
<dbReference type="GeneID" id="553253"/>
<dbReference type="KEGG" id="dre:553253"/>
<dbReference type="AGR" id="ZFIN:ZDB-GENE-121214-195"/>
<dbReference type="CTD" id="553253"/>
<dbReference type="ZFIN" id="ZDB-GENE-121214-195">
    <property type="gene designation" value="pip4p1b"/>
</dbReference>
<dbReference type="eggNOG" id="KOG4684">
    <property type="taxonomic scope" value="Eukaryota"/>
</dbReference>
<dbReference type="HOGENOM" id="CLU_087485_0_0_1"/>
<dbReference type="InParanoid" id="Q66I51"/>
<dbReference type="OMA" id="TIYWRCL"/>
<dbReference type="OrthoDB" id="9939933at2759"/>
<dbReference type="PhylomeDB" id="Q66I51"/>
<dbReference type="TreeFam" id="TF316367"/>
<dbReference type="PRO" id="PR:Q66I51"/>
<dbReference type="Proteomes" id="UP000000437">
    <property type="component" value="Alternate scaffold 1"/>
</dbReference>
<dbReference type="Proteomes" id="UP000000437">
    <property type="component" value="Chromosome 1"/>
</dbReference>
<dbReference type="Bgee" id="ENSDARG00000026387">
    <property type="expression patterns" value="Expressed in mature ovarian follicle and 19 other cell types or tissues"/>
</dbReference>
<dbReference type="GO" id="GO:0031902">
    <property type="term" value="C:late endosome membrane"/>
    <property type="evidence" value="ECO:0000318"/>
    <property type="project" value="GO_Central"/>
</dbReference>
<dbReference type="GO" id="GO:0005765">
    <property type="term" value="C:lysosomal membrane"/>
    <property type="evidence" value="ECO:0000318"/>
    <property type="project" value="GO_Central"/>
</dbReference>
<dbReference type="GO" id="GO:0030670">
    <property type="term" value="C:phagocytic vesicle membrane"/>
    <property type="evidence" value="ECO:0000318"/>
    <property type="project" value="GO_Central"/>
</dbReference>
<dbReference type="GO" id="GO:0005886">
    <property type="term" value="C:plasma membrane"/>
    <property type="evidence" value="ECO:0000318"/>
    <property type="project" value="GO_Central"/>
</dbReference>
<dbReference type="GO" id="GO:0034597">
    <property type="term" value="F:phosphatidylinositol-4,5-bisphosphate 4-phosphatase activity"/>
    <property type="evidence" value="ECO:0000318"/>
    <property type="project" value="GO_Central"/>
</dbReference>
<dbReference type="GO" id="GO:0046856">
    <property type="term" value="P:phosphatidylinositol dephosphorylation"/>
    <property type="evidence" value="ECO:0000318"/>
    <property type="project" value="GO_Central"/>
</dbReference>
<dbReference type="InterPro" id="IPR019178">
    <property type="entry name" value="PtdIns-P2-Ptase"/>
</dbReference>
<dbReference type="PANTHER" id="PTHR21014">
    <property type="entry name" value="PHOSPHATIDYLINOSITOL-4,5-BISPHOSPHATE 4-PHOSPHATASE"/>
    <property type="match status" value="1"/>
</dbReference>
<dbReference type="PANTHER" id="PTHR21014:SF2">
    <property type="entry name" value="TYPE 1 PHOSPHATIDYLINOSITOL 4,5-BISPHOSPHATE 4-PHOSPHATASE"/>
    <property type="match status" value="1"/>
</dbReference>
<dbReference type="Pfam" id="PF09788">
    <property type="entry name" value="Tmemb_55A"/>
    <property type="match status" value="1"/>
</dbReference>
<feature type="chain" id="PRO_0000235237" description="Type I phosphatidylinositol 4,5-bisphosphate 4-phosphatase-B">
    <location>
        <begin position="1"/>
        <end position="262"/>
    </location>
</feature>
<feature type="transmembrane region" description="Helical" evidence="2">
    <location>
        <begin position="198"/>
        <end position="218"/>
    </location>
</feature>
<feature type="transmembrane region" description="Helical" evidence="2">
    <location>
        <begin position="227"/>
        <end position="247"/>
    </location>
</feature>
<feature type="region of interest" description="Disordered" evidence="3">
    <location>
        <begin position="1"/>
        <end position="25"/>
    </location>
</feature>
<feature type="short sequence motif" description="CX5R motif">
    <location>
        <begin position="118"/>
        <end position="124"/>
    </location>
</feature>
<feature type="active site" evidence="1">
    <location>
        <position position="118"/>
    </location>
</feature>
<comment type="function">
    <text evidence="1">Catalyzes the hydrolysis of the 4-position phosphate of phosphatidylinositol 4,5-bisphosphate.</text>
</comment>
<comment type="catalytic activity">
    <reaction>
        <text>a 1,2-diacyl-sn-glycero-3-phospho-(1D-myo-inositol-4,5-bisphosphate) + H2O = a 1,2-diacyl-sn-glycero-3-phospho-(1D-myo-inositol-5-phosphate) + phosphate</text>
        <dbReference type="Rhea" id="RHEA:25674"/>
        <dbReference type="ChEBI" id="CHEBI:15377"/>
        <dbReference type="ChEBI" id="CHEBI:43474"/>
        <dbReference type="ChEBI" id="CHEBI:57795"/>
        <dbReference type="ChEBI" id="CHEBI:58456"/>
        <dbReference type="EC" id="3.1.3.78"/>
    </reaction>
</comment>
<comment type="subcellular location">
    <subcellularLocation>
        <location evidence="1">Late endosome membrane</location>
        <topology evidence="1">Multi-pass membrane protein</topology>
    </subcellularLocation>
    <subcellularLocation>
        <location evidence="1">Lysosome membrane</location>
        <topology evidence="1">Multi-pass membrane protein</topology>
    </subcellularLocation>
</comment>
<comment type="sequence caution" evidence="4">
    <conflict type="erroneous initiation">
        <sequence resource="EMBL-CDS" id="AAH81529"/>
    </conflict>
</comment>
<evidence type="ECO:0000250" key="1"/>
<evidence type="ECO:0000255" key="2"/>
<evidence type="ECO:0000256" key="3">
    <source>
        <dbReference type="SAM" id="MobiDB-lite"/>
    </source>
</evidence>
<evidence type="ECO:0000305" key="4"/>